<proteinExistence type="inferred from homology"/>
<protein>
    <recommendedName>
        <fullName>Putative 4-hydroxy-4-methyl-2-oxoglutarate aldolase</fullName>
        <shortName>HMG aldolase</shortName>
        <ecNumber>4.1.3.17</ecNumber>
    </recommendedName>
    <alternativeName>
        <fullName>Oxaloacetate decarboxylase</fullName>
        <shortName>OAA decarboxylase</shortName>
        <ecNumber>4.1.1.112</ecNumber>
    </alternativeName>
    <alternativeName>
        <fullName>Regulator of ribonuclease activity homolog</fullName>
    </alternativeName>
    <alternativeName>
        <fullName>RraA-like protein</fullName>
    </alternativeName>
</protein>
<feature type="chain" id="PRO_1000013859" description="Putative 4-hydroxy-4-methyl-2-oxoglutarate aldolase">
    <location>
        <begin position="1"/>
        <end position="163"/>
    </location>
</feature>
<feature type="binding site" evidence="1">
    <location>
        <begin position="76"/>
        <end position="79"/>
    </location>
    <ligand>
        <name>substrate</name>
    </ligand>
</feature>
<feature type="binding site" evidence="1">
    <location>
        <position position="98"/>
    </location>
    <ligand>
        <name>substrate</name>
    </ligand>
</feature>
<feature type="binding site" evidence="1">
    <location>
        <position position="99"/>
    </location>
    <ligand>
        <name>a divalent metal cation</name>
        <dbReference type="ChEBI" id="CHEBI:60240"/>
    </ligand>
</feature>
<name>RRAAH_PSEF5</name>
<evidence type="ECO:0000250" key="1"/>
<evidence type="ECO:0000305" key="2"/>
<dbReference type="EC" id="4.1.3.17"/>
<dbReference type="EC" id="4.1.1.112"/>
<dbReference type="EMBL" id="CP000076">
    <property type="protein sequence ID" value="AAY91159.1"/>
    <property type="molecule type" value="Genomic_DNA"/>
</dbReference>
<dbReference type="SMR" id="Q4KFJ3"/>
<dbReference type="STRING" id="220664.PFL_1871"/>
<dbReference type="KEGG" id="pfl:PFL_1871"/>
<dbReference type="PATRIC" id="fig|220664.5.peg.1906"/>
<dbReference type="eggNOG" id="COG0684">
    <property type="taxonomic scope" value="Bacteria"/>
</dbReference>
<dbReference type="HOGENOM" id="CLU_072626_4_0_6"/>
<dbReference type="Proteomes" id="UP000008540">
    <property type="component" value="Chromosome"/>
</dbReference>
<dbReference type="GO" id="GO:0047443">
    <property type="term" value="F:4-hydroxy-4-methyl-2-oxoglutarate aldolase activity"/>
    <property type="evidence" value="ECO:0007669"/>
    <property type="project" value="UniProtKB-EC"/>
</dbReference>
<dbReference type="GO" id="GO:0046872">
    <property type="term" value="F:metal ion binding"/>
    <property type="evidence" value="ECO:0007669"/>
    <property type="project" value="UniProtKB-KW"/>
</dbReference>
<dbReference type="GO" id="GO:0008948">
    <property type="term" value="F:oxaloacetate decarboxylase activity"/>
    <property type="evidence" value="ECO:0007669"/>
    <property type="project" value="UniProtKB-EC"/>
</dbReference>
<dbReference type="GO" id="GO:0008428">
    <property type="term" value="F:ribonuclease inhibitor activity"/>
    <property type="evidence" value="ECO:0007669"/>
    <property type="project" value="InterPro"/>
</dbReference>
<dbReference type="GO" id="GO:0051252">
    <property type="term" value="P:regulation of RNA metabolic process"/>
    <property type="evidence" value="ECO:0007669"/>
    <property type="project" value="InterPro"/>
</dbReference>
<dbReference type="CDD" id="cd16841">
    <property type="entry name" value="RraA_family"/>
    <property type="match status" value="1"/>
</dbReference>
<dbReference type="Gene3D" id="3.50.30.40">
    <property type="entry name" value="Ribonuclease E inhibitor RraA/RraA-like"/>
    <property type="match status" value="1"/>
</dbReference>
<dbReference type="InterPro" id="IPR010203">
    <property type="entry name" value="RraA"/>
</dbReference>
<dbReference type="InterPro" id="IPR005493">
    <property type="entry name" value="RraA/RraA-like"/>
</dbReference>
<dbReference type="InterPro" id="IPR036704">
    <property type="entry name" value="RraA/RraA-like_sf"/>
</dbReference>
<dbReference type="NCBIfam" id="TIGR01935">
    <property type="entry name" value="NOT-MenG"/>
    <property type="match status" value="1"/>
</dbReference>
<dbReference type="NCBIfam" id="NF006875">
    <property type="entry name" value="PRK09372.1"/>
    <property type="match status" value="1"/>
</dbReference>
<dbReference type="NCBIfam" id="NF009134">
    <property type="entry name" value="PRK12487.1"/>
    <property type="match status" value="1"/>
</dbReference>
<dbReference type="PANTHER" id="PTHR33254">
    <property type="entry name" value="4-HYDROXY-4-METHYL-2-OXOGLUTARATE ALDOLASE 3-RELATED"/>
    <property type="match status" value="1"/>
</dbReference>
<dbReference type="PANTHER" id="PTHR33254:SF29">
    <property type="entry name" value="REGULATOR OF RIBONUCLEASE ACTIVITY A"/>
    <property type="match status" value="1"/>
</dbReference>
<dbReference type="Pfam" id="PF03737">
    <property type="entry name" value="RraA-like"/>
    <property type="match status" value="1"/>
</dbReference>
<dbReference type="SUPFAM" id="SSF89562">
    <property type="entry name" value="RraA-like"/>
    <property type="match status" value="1"/>
</dbReference>
<organism>
    <name type="scientific">Pseudomonas fluorescens (strain ATCC BAA-477 / NRRL B-23932 / Pf-5)</name>
    <dbReference type="NCBI Taxonomy" id="220664"/>
    <lineage>
        <taxon>Bacteria</taxon>
        <taxon>Pseudomonadati</taxon>
        <taxon>Pseudomonadota</taxon>
        <taxon>Gammaproteobacteria</taxon>
        <taxon>Pseudomonadales</taxon>
        <taxon>Pseudomonadaceae</taxon>
        <taxon>Pseudomonas</taxon>
    </lineage>
</organism>
<keyword id="KW-0456">Lyase</keyword>
<keyword id="KW-0479">Metal-binding</keyword>
<comment type="function">
    <text evidence="1">Catalyzes the aldol cleavage of 4-hydroxy-4-methyl-2-oxoglutarate (HMG) into 2 molecules of pyruvate. Also contains a secondary oxaloacetate (OAA) decarboxylase activity due to the common pyruvate enolate transition state formed following C-C bond cleavage in the retro-aldol and decarboxylation reactions (By similarity).</text>
</comment>
<comment type="catalytic activity">
    <reaction>
        <text>4-hydroxy-4-methyl-2-oxoglutarate = 2 pyruvate</text>
        <dbReference type="Rhea" id="RHEA:22748"/>
        <dbReference type="ChEBI" id="CHEBI:15361"/>
        <dbReference type="ChEBI" id="CHEBI:58276"/>
        <dbReference type="EC" id="4.1.3.17"/>
    </reaction>
</comment>
<comment type="catalytic activity">
    <reaction>
        <text>oxaloacetate + H(+) = pyruvate + CO2</text>
        <dbReference type="Rhea" id="RHEA:15641"/>
        <dbReference type="ChEBI" id="CHEBI:15361"/>
        <dbReference type="ChEBI" id="CHEBI:15378"/>
        <dbReference type="ChEBI" id="CHEBI:16452"/>
        <dbReference type="ChEBI" id="CHEBI:16526"/>
        <dbReference type="EC" id="4.1.1.112"/>
    </reaction>
</comment>
<comment type="cofactor">
    <cofactor evidence="1">
        <name>a divalent metal cation</name>
        <dbReference type="ChEBI" id="CHEBI:60240"/>
    </cofactor>
    <text evidence="1">Divalent metal cation.</text>
</comment>
<comment type="subunit">
    <text evidence="1">Homotrimer.</text>
</comment>
<comment type="similarity">
    <text evidence="2">Belongs to the class II aldolase/RraA-like family.</text>
</comment>
<reference key="1">
    <citation type="journal article" date="2005" name="Nat. Biotechnol.">
        <title>Complete genome sequence of the plant commensal Pseudomonas fluorescens Pf-5.</title>
        <authorList>
            <person name="Paulsen I.T."/>
            <person name="Press C.M."/>
            <person name="Ravel J."/>
            <person name="Kobayashi D.Y."/>
            <person name="Myers G.S.A."/>
            <person name="Mavrodi D.V."/>
            <person name="DeBoy R.T."/>
            <person name="Seshadri R."/>
            <person name="Ren Q."/>
            <person name="Madupu R."/>
            <person name="Dodson R.J."/>
            <person name="Durkin A.S."/>
            <person name="Brinkac L.M."/>
            <person name="Daugherty S.C."/>
            <person name="Sullivan S.A."/>
            <person name="Rosovitz M.J."/>
            <person name="Gwinn M.L."/>
            <person name="Zhou L."/>
            <person name="Schneider D.J."/>
            <person name="Cartinhour S.W."/>
            <person name="Nelson W.C."/>
            <person name="Weidman J."/>
            <person name="Watkins K."/>
            <person name="Tran K."/>
            <person name="Khouri H."/>
            <person name="Pierson E.A."/>
            <person name="Pierson L.S. III"/>
            <person name="Thomashow L.S."/>
            <person name="Loper J.E."/>
        </authorList>
    </citation>
    <scope>NUCLEOTIDE SEQUENCE [LARGE SCALE GENOMIC DNA]</scope>
    <source>
        <strain>ATCC BAA-477 / NRRL B-23932 / Pf-5</strain>
    </source>
</reference>
<accession>Q4KFJ3</accession>
<sequence length="163" mass="17563">MNHYLTPDLCDAYPDLVQVVEPMFSNFGGRDSFGGEIVTIKCFEDNSLVKEQVELKGQGKVLVVDGGGSLRRALLGDMLAEKAAKNGWEGLVIYGCIRDVDVIAQTDLGVQALASHPMKTDKRGIGDLNVAVTFAGVTFRPGEYVYADNNGVIVSPSPLKMPE</sequence>
<gene>
    <name type="ordered locus">PFL_1871</name>
</gene>